<accession>A4FVT7</accession>
<organism>
    <name type="scientific">Methanococcus maripaludis (strain C5 / ATCC BAA-1333)</name>
    <dbReference type="NCBI Taxonomy" id="402880"/>
    <lineage>
        <taxon>Archaea</taxon>
        <taxon>Methanobacteriati</taxon>
        <taxon>Methanobacteriota</taxon>
        <taxon>Methanomada group</taxon>
        <taxon>Methanococci</taxon>
        <taxon>Methanococcales</taxon>
        <taxon>Methanococcaceae</taxon>
        <taxon>Methanococcus</taxon>
    </lineage>
</organism>
<protein>
    <recommendedName>
        <fullName evidence="1">Large ribosomal subunit protein uL15</fullName>
    </recommendedName>
    <alternativeName>
        <fullName evidence="3">50S ribosomal protein L15</fullName>
    </alternativeName>
</protein>
<comment type="function">
    <text evidence="1">Binds to the 23S rRNA.</text>
</comment>
<comment type="subunit">
    <text evidence="1">Part of the 50S ribosomal subunit.</text>
</comment>
<comment type="similarity">
    <text evidence="1">Belongs to the universal ribosomal protein uL15 family.</text>
</comment>
<gene>
    <name evidence="1" type="primary">rpl15</name>
    <name type="ordered locus">MmarC5_0157</name>
</gene>
<keyword id="KW-0687">Ribonucleoprotein</keyword>
<keyword id="KW-0689">Ribosomal protein</keyword>
<keyword id="KW-0694">RNA-binding</keyword>
<keyword id="KW-0699">rRNA-binding</keyword>
<name>RL15_METM5</name>
<evidence type="ECO:0000255" key="1">
    <source>
        <dbReference type="HAMAP-Rule" id="MF_01341"/>
    </source>
</evidence>
<evidence type="ECO:0000256" key="2">
    <source>
        <dbReference type="SAM" id="MobiDB-lite"/>
    </source>
</evidence>
<evidence type="ECO:0000305" key="3"/>
<feature type="chain" id="PRO_1000054491" description="Large ribosomal subunit protein uL15">
    <location>
        <begin position="1"/>
        <end position="143"/>
    </location>
</feature>
<feature type="region of interest" description="Disordered" evidence="2">
    <location>
        <begin position="1"/>
        <end position="38"/>
    </location>
</feature>
<feature type="compositionally biased region" description="Basic residues" evidence="2">
    <location>
        <begin position="1"/>
        <end position="13"/>
    </location>
</feature>
<feature type="compositionally biased region" description="Basic residues" evidence="2">
    <location>
        <begin position="23"/>
        <end position="38"/>
    </location>
</feature>
<sequence>MIRKSKKITKMRGSRTCGYGEAKKHRGAGHRGGRGNAGHQKHKWLSVCKFNPDYFGKYGFNRNPCLIKQLETINIGELEEYILKYKDAFQVEDGKVVVDATTIGYEKVLGKGRISTAMVVKAVEFSEGAKEKIEAAGGEFVEL</sequence>
<reference key="1">
    <citation type="submission" date="2007-03" db="EMBL/GenBank/DDBJ databases">
        <title>Complete sequence of chromosome of Methanococcus maripaludis C5.</title>
        <authorList>
            <consortium name="US DOE Joint Genome Institute"/>
            <person name="Copeland A."/>
            <person name="Lucas S."/>
            <person name="Lapidus A."/>
            <person name="Barry K."/>
            <person name="Glavina del Rio T."/>
            <person name="Dalin E."/>
            <person name="Tice H."/>
            <person name="Pitluck S."/>
            <person name="Chertkov O."/>
            <person name="Brettin T."/>
            <person name="Bruce D."/>
            <person name="Han C."/>
            <person name="Detter J.C."/>
            <person name="Schmutz J."/>
            <person name="Larimer F."/>
            <person name="Land M."/>
            <person name="Hauser L."/>
            <person name="Kyrpides N."/>
            <person name="Mikhailova N."/>
            <person name="Sieprawska-Lupa M."/>
            <person name="Whitman W.B."/>
            <person name="Richardson P."/>
        </authorList>
    </citation>
    <scope>NUCLEOTIDE SEQUENCE [LARGE SCALE GENOMIC DNA]</scope>
    <source>
        <strain>C5 / ATCC BAA-1333</strain>
    </source>
</reference>
<proteinExistence type="inferred from homology"/>
<dbReference type="EMBL" id="CP000609">
    <property type="protein sequence ID" value="ABO34474.1"/>
    <property type="molecule type" value="Genomic_DNA"/>
</dbReference>
<dbReference type="RefSeq" id="WP_011867934.1">
    <property type="nucleotide sequence ID" value="NC_009135.1"/>
</dbReference>
<dbReference type="SMR" id="A4FVT7"/>
<dbReference type="STRING" id="402880.MmarC5_0157"/>
<dbReference type="GeneID" id="4927598"/>
<dbReference type="KEGG" id="mmq:MmarC5_0157"/>
<dbReference type="eggNOG" id="arCOG00779">
    <property type="taxonomic scope" value="Archaea"/>
</dbReference>
<dbReference type="HOGENOM" id="CLU_109163_0_0_2"/>
<dbReference type="OrthoDB" id="9418at2157"/>
<dbReference type="Proteomes" id="UP000000253">
    <property type="component" value="Chromosome"/>
</dbReference>
<dbReference type="GO" id="GO:0022625">
    <property type="term" value="C:cytosolic large ribosomal subunit"/>
    <property type="evidence" value="ECO:0007669"/>
    <property type="project" value="TreeGrafter"/>
</dbReference>
<dbReference type="GO" id="GO:0019843">
    <property type="term" value="F:rRNA binding"/>
    <property type="evidence" value="ECO:0007669"/>
    <property type="project" value="UniProtKB-UniRule"/>
</dbReference>
<dbReference type="GO" id="GO:0003735">
    <property type="term" value="F:structural constituent of ribosome"/>
    <property type="evidence" value="ECO:0007669"/>
    <property type="project" value="InterPro"/>
</dbReference>
<dbReference type="GO" id="GO:0006412">
    <property type="term" value="P:translation"/>
    <property type="evidence" value="ECO:0007669"/>
    <property type="project" value="UniProtKB-UniRule"/>
</dbReference>
<dbReference type="Gene3D" id="3.100.10.10">
    <property type="match status" value="1"/>
</dbReference>
<dbReference type="Gene3D" id="4.10.990.10">
    <property type="match status" value="1"/>
</dbReference>
<dbReference type="HAMAP" id="MF_01341">
    <property type="entry name" value="Ribosomal_uL15"/>
    <property type="match status" value="1"/>
</dbReference>
<dbReference type="InterPro" id="IPR027386">
    <property type="entry name" value="Rbsml_uL15_N"/>
</dbReference>
<dbReference type="InterPro" id="IPR030878">
    <property type="entry name" value="Ribosomal_uL15"/>
</dbReference>
<dbReference type="InterPro" id="IPR021131">
    <property type="entry name" value="Ribosomal_uL15/eL18"/>
</dbReference>
<dbReference type="InterPro" id="IPR036227">
    <property type="entry name" value="Ribosomal_uL15/eL18_sf"/>
</dbReference>
<dbReference type="InterPro" id="IPR001196">
    <property type="entry name" value="Ribosomal_uL15_CS"/>
</dbReference>
<dbReference type="PANTHER" id="PTHR11721">
    <property type="entry name" value="60S RIBOSOMAL PROTEIN L27A"/>
    <property type="match status" value="1"/>
</dbReference>
<dbReference type="PANTHER" id="PTHR11721:SF3">
    <property type="entry name" value="LARGE RIBOSOMAL SUBUNIT PROTEIN UL15"/>
    <property type="match status" value="1"/>
</dbReference>
<dbReference type="Pfam" id="PF00828">
    <property type="entry name" value="Ribosomal_L27A"/>
    <property type="match status" value="1"/>
</dbReference>
<dbReference type="SUPFAM" id="SSF52080">
    <property type="entry name" value="Ribosomal proteins L15p and L18e"/>
    <property type="match status" value="1"/>
</dbReference>
<dbReference type="PROSITE" id="PS00475">
    <property type="entry name" value="RIBOSOMAL_L15"/>
    <property type="match status" value="1"/>
</dbReference>